<sequence>MARVTVEDCVDKVENRFELVLLAGHRARQISQGAPITVDRDNDKNPVVALREIADETLSPDDLKEDLIHSLQKHVEVDEPEAAPAQIANAAEEIAEGIAEAGEEDVVTFDRMSEEELLAGIEGLVAPEKNDGF</sequence>
<comment type="function">
    <text evidence="1">Promotes RNA polymerase assembly. Latches the N- and C-terminal regions of the beta' subunit thereby facilitating its interaction with the beta and alpha subunits.</text>
</comment>
<comment type="catalytic activity">
    <reaction evidence="1">
        <text>RNA(n) + a ribonucleoside 5'-triphosphate = RNA(n+1) + diphosphate</text>
        <dbReference type="Rhea" id="RHEA:21248"/>
        <dbReference type="Rhea" id="RHEA-COMP:14527"/>
        <dbReference type="Rhea" id="RHEA-COMP:17342"/>
        <dbReference type="ChEBI" id="CHEBI:33019"/>
        <dbReference type="ChEBI" id="CHEBI:61557"/>
        <dbReference type="ChEBI" id="CHEBI:140395"/>
        <dbReference type="EC" id="2.7.7.6"/>
    </reaction>
</comment>
<comment type="subunit">
    <text evidence="1">The RNAP catalytic core consists of 2 alpha, 1 beta, 1 beta' and 1 omega subunit. When a sigma factor is associated with the core the holoenzyme is formed, which can initiate transcription.</text>
</comment>
<comment type="similarity">
    <text evidence="1">Belongs to the RNA polymerase subunit omega family.</text>
</comment>
<evidence type="ECO:0000255" key="1">
    <source>
        <dbReference type="HAMAP-Rule" id="MF_00366"/>
    </source>
</evidence>
<gene>
    <name evidence="1" type="primary">rpoZ</name>
    <name type="ordered locus">BMEI1297</name>
</gene>
<protein>
    <recommendedName>
        <fullName evidence="1">DNA-directed RNA polymerase subunit omega</fullName>
        <shortName evidence="1">RNAP omega subunit</shortName>
        <ecNumber evidence="1">2.7.7.6</ecNumber>
    </recommendedName>
    <alternativeName>
        <fullName evidence="1">RNA polymerase omega subunit</fullName>
    </alternativeName>
    <alternativeName>
        <fullName evidence="1">Transcriptase subunit omega</fullName>
    </alternativeName>
</protein>
<keyword id="KW-0240">DNA-directed RNA polymerase</keyword>
<keyword id="KW-0548">Nucleotidyltransferase</keyword>
<keyword id="KW-0804">Transcription</keyword>
<keyword id="KW-0808">Transferase</keyword>
<reference key="1">
    <citation type="journal article" date="2002" name="Proc. Natl. Acad. Sci. U.S.A.">
        <title>The genome sequence of the facultative intracellular pathogen Brucella melitensis.</title>
        <authorList>
            <person name="DelVecchio V.G."/>
            <person name="Kapatral V."/>
            <person name="Redkar R.J."/>
            <person name="Patra G."/>
            <person name="Mujer C."/>
            <person name="Los T."/>
            <person name="Ivanova N."/>
            <person name="Anderson I."/>
            <person name="Bhattacharyya A."/>
            <person name="Lykidis A."/>
            <person name="Reznik G."/>
            <person name="Jablonski L."/>
            <person name="Larsen N."/>
            <person name="D'Souza M."/>
            <person name="Bernal A."/>
            <person name="Mazur M."/>
            <person name="Goltsman E."/>
            <person name="Selkov E."/>
            <person name="Elzer P.H."/>
            <person name="Hagius S."/>
            <person name="O'Callaghan D."/>
            <person name="Letesson J.-J."/>
            <person name="Haselkorn R."/>
            <person name="Kyrpides N.C."/>
            <person name="Overbeek R."/>
        </authorList>
    </citation>
    <scope>NUCLEOTIDE SEQUENCE [LARGE SCALE GENOMIC DNA]</scope>
    <source>
        <strain>ATCC 23456 / CCUG 17765 / NCTC 10094 / 16M</strain>
    </source>
</reference>
<proteinExistence type="inferred from homology"/>
<dbReference type="EC" id="2.7.7.6" evidence="1"/>
<dbReference type="EMBL" id="AE008917">
    <property type="protein sequence ID" value="AAL52478.1"/>
    <property type="molecule type" value="Genomic_DNA"/>
</dbReference>
<dbReference type="PIR" id="AC3414">
    <property type="entry name" value="AC3414"/>
</dbReference>
<dbReference type="RefSeq" id="WP_002963795.1">
    <property type="nucleotide sequence ID" value="NZ_GG703778.1"/>
</dbReference>
<dbReference type="SMR" id="Q8YG64"/>
<dbReference type="GeneID" id="93016943"/>
<dbReference type="KEGG" id="bme:BMEI1297"/>
<dbReference type="KEGG" id="bmel:DK63_108"/>
<dbReference type="PATRIC" id="fig|224914.52.peg.113"/>
<dbReference type="eggNOG" id="COG1758">
    <property type="taxonomic scope" value="Bacteria"/>
</dbReference>
<dbReference type="PhylomeDB" id="Q8YG64"/>
<dbReference type="Proteomes" id="UP000000419">
    <property type="component" value="Chromosome I"/>
</dbReference>
<dbReference type="GO" id="GO:0000428">
    <property type="term" value="C:DNA-directed RNA polymerase complex"/>
    <property type="evidence" value="ECO:0007669"/>
    <property type="project" value="UniProtKB-KW"/>
</dbReference>
<dbReference type="GO" id="GO:0003677">
    <property type="term" value="F:DNA binding"/>
    <property type="evidence" value="ECO:0007669"/>
    <property type="project" value="UniProtKB-UniRule"/>
</dbReference>
<dbReference type="GO" id="GO:0003899">
    <property type="term" value="F:DNA-directed RNA polymerase activity"/>
    <property type="evidence" value="ECO:0007669"/>
    <property type="project" value="UniProtKB-UniRule"/>
</dbReference>
<dbReference type="GO" id="GO:0006351">
    <property type="term" value="P:DNA-templated transcription"/>
    <property type="evidence" value="ECO:0007669"/>
    <property type="project" value="UniProtKB-UniRule"/>
</dbReference>
<dbReference type="Gene3D" id="3.90.940.10">
    <property type="match status" value="1"/>
</dbReference>
<dbReference type="HAMAP" id="MF_00366">
    <property type="entry name" value="RNApol_bact_RpoZ"/>
    <property type="match status" value="1"/>
</dbReference>
<dbReference type="InterPro" id="IPR003716">
    <property type="entry name" value="DNA-dir_RNA_pol_omega"/>
</dbReference>
<dbReference type="InterPro" id="IPR006110">
    <property type="entry name" value="Pol_omega/Rpo6/RPB6"/>
</dbReference>
<dbReference type="InterPro" id="IPR036161">
    <property type="entry name" value="RPB6/omega-like_sf"/>
</dbReference>
<dbReference type="NCBIfam" id="TIGR00690">
    <property type="entry name" value="rpoZ"/>
    <property type="match status" value="1"/>
</dbReference>
<dbReference type="PANTHER" id="PTHR34476">
    <property type="entry name" value="DNA-DIRECTED RNA POLYMERASE SUBUNIT OMEGA"/>
    <property type="match status" value="1"/>
</dbReference>
<dbReference type="PANTHER" id="PTHR34476:SF1">
    <property type="entry name" value="DNA-DIRECTED RNA POLYMERASE SUBUNIT OMEGA"/>
    <property type="match status" value="1"/>
</dbReference>
<dbReference type="Pfam" id="PF01192">
    <property type="entry name" value="RNA_pol_Rpb6"/>
    <property type="match status" value="1"/>
</dbReference>
<dbReference type="SMART" id="SM01409">
    <property type="entry name" value="RNA_pol_Rpb6"/>
    <property type="match status" value="1"/>
</dbReference>
<dbReference type="SUPFAM" id="SSF63562">
    <property type="entry name" value="RPB6/omega subunit-like"/>
    <property type="match status" value="1"/>
</dbReference>
<accession>Q8YG64</accession>
<organism>
    <name type="scientific">Brucella melitensis biotype 1 (strain ATCC 23456 / CCUG 17765 / NCTC 10094 / 16M)</name>
    <dbReference type="NCBI Taxonomy" id="224914"/>
    <lineage>
        <taxon>Bacteria</taxon>
        <taxon>Pseudomonadati</taxon>
        <taxon>Pseudomonadota</taxon>
        <taxon>Alphaproteobacteria</taxon>
        <taxon>Hyphomicrobiales</taxon>
        <taxon>Brucellaceae</taxon>
        <taxon>Brucella/Ochrobactrum group</taxon>
        <taxon>Brucella</taxon>
    </lineage>
</organism>
<name>RPOZ_BRUME</name>
<feature type="chain" id="PRO_0000128922" description="DNA-directed RNA polymerase subunit omega">
    <location>
        <begin position="1"/>
        <end position="133"/>
    </location>
</feature>